<dbReference type="EMBL" id="AP006715">
    <property type="protein sequence ID" value="BAE92448.1"/>
    <property type="molecule type" value="Genomic_DNA"/>
</dbReference>
<dbReference type="RefSeq" id="YP_537005.1">
    <property type="nucleotide sequence ID" value="NC_007932.1"/>
</dbReference>
<dbReference type="SMR" id="Q1XDG3"/>
<dbReference type="GeneID" id="3978788"/>
<dbReference type="GO" id="GO:0009535">
    <property type="term" value="C:chloroplast thylakoid membrane"/>
    <property type="evidence" value="ECO:0007669"/>
    <property type="project" value="UniProtKB-SubCell"/>
</dbReference>
<dbReference type="GO" id="GO:0009539">
    <property type="term" value="C:photosystem II reaction center"/>
    <property type="evidence" value="ECO:0007669"/>
    <property type="project" value="InterPro"/>
</dbReference>
<dbReference type="GO" id="GO:0015979">
    <property type="term" value="P:photosynthesis"/>
    <property type="evidence" value="ECO:0007669"/>
    <property type="project" value="UniProtKB-UniRule"/>
</dbReference>
<dbReference type="HAMAP" id="MF_00808">
    <property type="entry name" value="PSII_PsbT"/>
    <property type="match status" value="1"/>
</dbReference>
<dbReference type="InterPro" id="IPR001743">
    <property type="entry name" value="PSII_PsbT"/>
</dbReference>
<dbReference type="InterPro" id="IPR037268">
    <property type="entry name" value="PSII_PsbT_sf"/>
</dbReference>
<dbReference type="PANTHER" id="PTHR36411">
    <property type="match status" value="1"/>
</dbReference>
<dbReference type="PANTHER" id="PTHR36411:SF2">
    <property type="entry name" value="PHOTOSYSTEM II REACTION CENTER PROTEIN T"/>
    <property type="match status" value="1"/>
</dbReference>
<dbReference type="Pfam" id="PF01405">
    <property type="entry name" value="PsbT"/>
    <property type="match status" value="1"/>
</dbReference>
<dbReference type="SUPFAM" id="SSF161029">
    <property type="entry name" value="Photosystem II reaction center protein T, PsbT"/>
    <property type="match status" value="1"/>
</dbReference>
<reference key="1">
    <citation type="submission" date="2003-11" db="EMBL/GenBank/DDBJ databases">
        <title>Whole genome sequence of Porphyra yezoensis chloroplast.</title>
        <authorList>
            <person name="Kunimoto M."/>
            <person name="Morishima K."/>
            <person name="Yoshikawa M."/>
            <person name="Fukuda S."/>
            <person name="Kobayashi T."/>
            <person name="Kobayashi M."/>
            <person name="Okazaki T."/>
            <person name="Ohara I."/>
            <person name="Nakayama I."/>
        </authorList>
    </citation>
    <scope>NUCLEOTIDE SEQUENCE [LARGE SCALE GENOMIC DNA]</scope>
    <source>
        <strain>U-51</strain>
    </source>
</reference>
<name>PSBT_PYRYE</name>
<geneLocation type="chloroplast"/>
<organism>
    <name type="scientific">Pyropia yezoensis</name>
    <name type="common">Susabi-nori</name>
    <name type="synonym">Porphyra yezoensis</name>
    <dbReference type="NCBI Taxonomy" id="2788"/>
    <lineage>
        <taxon>Eukaryota</taxon>
        <taxon>Rhodophyta</taxon>
        <taxon>Bangiophyceae</taxon>
        <taxon>Bangiales</taxon>
        <taxon>Bangiaceae</taxon>
        <taxon>Pyropia</taxon>
    </lineage>
</organism>
<keyword id="KW-0150">Chloroplast</keyword>
<keyword id="KW-0472">Membrane</keyword>
<keyword id="KW-0602">Photosynthesis</keyword>
<keyword id="KW-0604">Photosystem II</keyword>
<keyword id="KW-0934">Plastid</keyword>
<keyword id="KW-0793">Thylakoid</keyword>
<keyword id="KW-0812">Transmembrane</keyword>
<keyword id="KW-1133">Transmembrane helix</keyword>
<accession>Q1XDG3</accession>
<gene>
    <name evidence="1" type="primary">psbT</name>
</gene>
<sequence length="31" mass="3634">MEALVYVFLLTGTLMVIFFAIFFREPPRIAK</sequence>
<proteinExistence type="inferred from homology"/>
<comment type="function">
    <text evidence="1">Found at the monomer-monomer interface of the photosystem II (PS II) dimer, plays a role in assembly and dimerization of PSII. PSII is a light-driven water plastoquinone oxidoreductase, using light energy to abstract electrons from H(2)O, generating a proton gradient subsequently used for ATP formation.</text>
</comment>
<comment type="subunit">
    <text evidence="1">PSII is composed of 1 copy each of membrane proteins PsbA, PsbB, PsbC, PsbD, PsbE, PsbF, PsbH, PsbI, PsbJ, PsbK, PsbL, PsbM, PsbT, PsbX, PsbY, PsbZ, Psb30/Ycf12, at least 3 peripheral proteins of the oxygen-evolving complex and a large number of cofactors. It forms dimeric complexes.</text>
</comment>
<comment type="subcellular location">
    <subcellularLocation>
        <location evidence="1">Plastid</location>
        <location evidence="1">Chloroplast thylakoid membrane</location>
        <topology evidence="1">Single-pass membrane protein</topology>
    </subcellularLocation>
</comment>
<comment type="similarity">
    <text evidence="1">Belongs to the PsbT family.</text>
</comment>
<feature type="chain" id="PRO_0000276321" description="Photosystem II reaction center protein T">
    <location>
        <begin position="1"/>
        <end position="31"/>
    </location>
</feature>
<feature type="transmembrane region" description="Helical" evidence="1">
    <location>
        <begin position="3"/>
        <end position="23"/>
    </location>
</feature>
<evidence type="ECO:0000255" key="1">
    <source>
        <dbReference type="HAMAP-Rule" id="MF_00808"/>
    </source>
</evidence>
<protein>
    <recommendedName>
        <fullName evidence="1">Photosystem II reaction center protein T</fullName>
        <shortName evidence="1">PSII-T</shortName>
    </recommendedName>
</protein>